<proteinExistence type="evidence at protein level"/>
<gene>
    <name type="primary">ypjF</name>
    <name type="ordered locus">b2646</name>
    <name type="ordered locus">JW2627</name>
</gene>
<evidence type="ECO:0000269" key="1">
    <source>
    </source>
</evidence>
<evidence type="ECO:0000269" key="2">
    <source>
    </source>
</evidence>
<evidence type="ECO:0000269" key="3">
    <source>
    </source>
</evidence>
<evidence type="ECO:0000303" key="4">
    <source>
    </source>
</evidence>
<evidence type="ECO:0000305" key="5"/>
<keyword id="KW-1185">Reference proteome</keyword>
<keyword id="KW-1277">Toxin-antitoxin system</keyword>
<dbReference type="EMBL" id="U36840">
    <property type="protein sequence ID" value="AAA79814.1"/>
    <property type="molecule type" value="Genomic_DNA"/>
</dbReference>
<dbReference type="EMBL" id="U00096">
    <property type="protein sequence ID" value="AAC75694.1"/>
    <property type="molecule type" value="Genomic_DNA"/>
</dbReference>
<dbReference type="EMBL" id="AP009048">
    <property type="protein sequence ID" value="BAE76774.1"/>
    <property type="molecule type" value="Genomic_DNA"/>
</dbReference>
<dbReference type="PIR" id="T08657">
    <property type="entry name" value="T08657"/>
</dbReference>
<dbReference type="RefSeq" id="NP_417133.1">
    <property type="nucleotide sequence ID" value="NC_000913.3"/>
</dbReference>
<dbReference type="RefSeq" id="WP_001094400.1">
    <property type="nucleotide sequence ID" value="NZ_LN832404.1"/>
</dbReference>
<dbReference type="BioGRID" id="4262253">
    <property type="interactions" value="11"/>
</dbReference>
<dbReference type="BioGRID" id="851465">
    <property type="interactions" value="12"/>
</dbReference>
<dbReference type="FunCoup" id="Q46953">
    <property type="interactions" value="15"/>
</dbReference>
<dbReference type="IntAct" id="Q46953">
    <property type="interactions" value="12"/>
</dbReference>
<dbReference type="STRING" id="511145.b2646"/>
<dbReference type="PaxDb" id="511145-b2646"/>
<dbReference type="EnsemblBacteria" id="AAC75694">
    <property type="protein sequence ID" value="AAC75694"/>
    <property type="gene ID" value="b2646"/>
</dbReference>
<dbReference type="GeneID" id="947131"/>
<dbReference type="KEGG" id="ecj:JW2627"/>
<dbReference type="KEGG" id="eco:b2646"/>
<dbReference type="KEGG" id="ecoc:C3026_14620"/>
<dbReference type="PATRIC" id="fig|1411691.4.peg.4092"/>
<dbReference type="EchoBASE" id="EB4032"/>
<dbReference type="eggNOG" id="ENOG5030CTH">
    <property type="taxonomic scope" value="Bacteria"/>
</dbReference>
<dbReference type="HOGENOM" id="CLU_129204_1_1_6"/>
<dbReference type="InParanoid" id="Q46953"/>
<dbReference type="OMA" id="KYALMLP"/>
<dbReference type="OrthoDB" id="6580484at2"/>
<dbReference type="PhylomeDB" id="Q46953"/>
<dbReference type="BioCyc" id="EcoCyc:G7381-MONOMER"/>
<dbReference type="PRO" id="PR:Q46953"/>
<dbReference type="Proteomes" id="UP000000625">
    <property type="component" value="Chromosome"/>
</dbReference>
<dbReference type="InterPro" id="IPR009610">
    <property type="entry name" value="CbtA_toxin"/>
</dbReference>
<dbReference type="Pfam" id="PF06755">
    <property type="entry name" value="CbtA_toxin"/>
    <property type="match status" value="1"/>
</dbReference>
<reference key="1">
    <citation type="journal article" date="1997" name="Science">
        <title>The complete genome sequence of Escherichia coli K-12.</title>
        <authorList>
            <person name="Blattner F.R."/>
            <person name="Plunkett G. III"/>
            <person name="Bloch C.A."/>
            <person name="Perna N.T."/>
            <person name="Burland V."/>
            <person name="Riley M."/>
            <person name="Collado-Vides J."/>
            <person name="Glasner J.D."/>
            <person name="Rode C.K."/>
            <person name="Mayhew G.F."/>
            <person name="Gregor J."/>
            <person name="Davis N.W."/>
            <person name="Kirkpatrick H.A."/>
            <person name="Goeden M.A."/>
            <person name="Rose D.J."/>
            <person name="Mau B."/>
            <person name="Shao Y."/>
        </authorList>
    </citation>
    <scope>NUCLEOTIDE SEQUENCE [LARGE SCALE GENOMIC DNA]</scope>
    <source>
        <strain>K12 / MG1655 / ATCC 47076</strain>
    </source>
</reference>
<reference key="2">
    <citation type="journal article" date="2006" name="Mol. Syst. Biol.">
        <title>Highly accurate genome sequences of Escherichia coli K-12 strains MG1655 and W3110.</title>
        <authorList>
            <person name="Hayashi K."/>
            <person name="Morooka N."/>
            <person name="Yamamoto Y."/>
            <person name="Fujita K."/>
            <person name="Isono K."/>
            <person name="Choi S."/>
            <person name="Ohtsubo E."/>
            <person name="Baba T."/>
            <person name="Wanner B.L."/>
            <person name="Mori H."/>
            <person name="Horiuchi T."/>
        </authorList>
    </citation>
    <scope>NUCLEOTIDE SEQUENCE [LARGE SCALE GENOMIC DNA]</scope>
    <source>
        <strain>K12 / W3110 / ATCC 27325 / DSM 5911</strain>
    </source>
</reference>
<reference key="3">
    <citation type="journal article" date="2003" name="J. Bacteriol.">
        <title>A novel family of Escherichia coli toxin-antitoxin gene pairs.</title>
        <authorList>
            <person name="Brown J.M."/>
            <person name="Shaw K.J."/>
        </authorList>
    </citation>
    <scope>FUNCTION AS A TOXIN</scope>
    <source>
        <strain>K12 / MG1655 / ATCC 47076</strain>
    </source>
</reference>
<reference key="4">
    <citation type="journal article" date="2017" name="PLoS Genet.">
        <title>CbtA toxin of Escherichia coli inhibits cell division and cell elongation via direct and independent interactions with FtsZ and MreB.</title>
        <authorList>
            <person name="Heller D.M."/>
            <person name="Tavag M."/>
            <person name="Hochschild A."/>
        </authorList>
    </citation>
    <scope>FUNCTION AS A TOXIN</scope>
    <scope>INTERACTION WITH FTSZ AND MREB</scope>
    <scope>MUTAGENESIS OF PHE-65</scope>
</reference>
<reference key="5">
    <citation type="journal article" date="2017" name="Toxins">
        <title>Interaction of type IV toxin/antitoxin systems in cryptic prophages of Escherichia coli K-12.</title>
        <authorList>
            <person name="Wen Z."/>
            <person name="Wang P."/>
            <person name="Sun C."/>
            <person name="Guo Y."/>
            <person name="Wang X."/>
        </authorList>
    </citation>
    <scope>FUNCTION AS A TOXIN</scope>
    <scope>INTERACTION WITH FTSZ</scope>
    <scope>INDUCTION</scope>
    <scope>DISRUPTION PHENOTYPE</scope>
    <source>
        <strain>K12 / BW25113</strain>
    </source>
</reference>
<name>YPJF_ECOLI</name>
<comment type="function">
    <text evidence="1 2 3">Toxic component of a type IV toxin-antitoxin (TA) system (PubMed:14594833, PubMed:28257056, PubMed:28931012). Acts as a dual toxin inhibitor that blocks cell division and cell elongation in genetically separable interactions with FtsZ and MreB (PubMed:28931012). Overexpression results in inhibition of growth in liquid cultures (PubMed:14594833, PubMed:28257056, PubMed:28931012). Overexpression leads to formation of lemon-shaped cells; inactivated by overexpression of cognate antitoxin YfjZ but not when the 2 genes are coexpressed from the same plasmid (PubMed:28257056). Also neutralized by overexpression of non-cognate antitoxins YafW and CbeA (PubMed:28257056).</text>
</comment>
<comment type="subunit">
    <text evidence="2 3">Interacts with FtsZ but not MreB (PubMed:28257056). Another group finds interaction with FtsZ and MreB (PubMed:28931012).</text>
</comment>
<comment type="interaction">
    <interactant intactId="EBI-9134503">
        <id>Q46953</id>
    </interactant>
    <interactant intactId="EBI-9138440">
        <id>P0AAY6</id>
        <label>ybjN</label>
    </interactant>
    <organismsDiffer>false</organismsDiffer>
    <experiments>3</experiments>
</comment>
<comment type="induction">
    <text evidence="2">Expressed in mid-log phase at lower levels than toxin relE.</text>
</comment>
<comment type="disruption phenotype">
    <text evidence="2">Single deletion leads to an approximately 100-fold reduction in resistance to oxidative stress, deletion of 3 type IV toxin genes (cbtA, ykfI, ypfJ) leads to a slight reduction in resistance to oxidative stress, has no effect on cell growth.</text>
</comment>
<comment type="miscellaneous">
    <text evidence="5">Encoded in prophage CP4-57.</text>
</comment>
<comment type="similarity">
    <text evidence="5">Belongs to the CbtA/YkfI/YpjF toxin family.</text>
</comment>
<feature type="chain" id="PRO_0000169288" description="Toxin YpjF">
    <location>
        <begin position="1"/>
        <end position="109"/>
    </location>
</feature>
<feature type="mutagenesis site" description="Loss of interaction with FtsZ, no effect on interaction with MreB." evidence="3">
    <original>F</original>
    <variation>S</variation>
    <location>
        <position position="65"/>
    </location>
</feature>
<accession>Q46953</accession>
<accession>Q2MAD2</accession>
<sequence length="109" mass="12308">MNTLPATISQAAKPCLSPVAVWQMLLTRLLEQHYGLTLNDTPFSDETVIKEHIDAGITLADAVNFLVEKYELVRIDHRGFSWQQQSPYISVVDILRARRSTGLLKTNVK</sequence>
<organism>
    <name type="scientific">Escherichia coli (strain K12)</name>
    <dbReference type="NCBI Taxonomy" id="83333"/>
    <lineage>
        <taxon>Bacteria</taxon>
        <taxon>Pseudomonadati</taxon>
        <taxon>Pseudomonadota</taxon>
        <taxon>Gammaproteobacteria</taxon>
        <taxon>Enterobacterales</taxon>
        <taxon>Enterobacteriaceae</taxon>
        <taxon>Escherichia</taxon>
    </lineage>
</organism>
<protein>
    <recommendedName>
        <fullName evidence="4">Toxin YpjF</fullName>
    </recommendedName>
</protein>